<gene>
    <name type="primary">G</name>
</gene>
<proteinExistence type="evidence at protein level"/>
<protein>
    <recommendedName>
        <fullName>Glycoprotein</fullName>
    </recommendedName>
</protein>
<comment type="function">
    <text evidence="2 5">Attaches the virus to host LDL receptors, inducing clathrin-dependent endocytosis of the virion (By similarity). In the endosome, the acidic pH induces conformational changes in the glycoprotein trimer, which trigger fusion between virus and endosomal membrane (PubMed:20921141).</text>
</comment>
<comment type="subunit">
    <text evidence="2">Homotrimer. Interacts with host LDL at target cell surface.</text>
</comment>
<comment type="subcellular location">
    <subcellularLocation>
        <location evidence="2">Virion membrane</location>
        <topology evidence="2">Single-pass type I membrane protein</topology>
    </subcellularLocation>
    <subcellularLocation>
        <location evidence="2">Host membrane</location>
        <topology evidence="2">Single-pass type I membrane protein</topology>
    </subcellularLocation>
</comment>
<comment type="PTM">
    <text evidence="6">Glycosylated by host. Palmitoylated by host.</text>
</comment>
<comment type="biotechnology">
    <text>Used to pseudotype many virus-like particles like lentiviral vector, because of its broad spectrum of host cell tropism. Also used in viral vectors studies in cancer therapy.</text>
</comment>
<comment type="similarity">
    <text evidence="7">Belongs to the vesiculovirus glycoprotein family.</text>
</comment>
<organism>
    <name type="scientific">Vesicular stomatitis Indiana virus (strain Orsay)</name>
    <name type="common">VSIV</name>
    <dbReference type="NCBI Taxonomy" id="11284"/>
    <lineage>
        <taxon>Viruses</taxon>
        <taxon>Riboviria</taxon>
        <taxon>Orthornavirae</taxon>
        <taxon>Negarnaviricota</taxon>
        <taxon>Haploviricotina</taxon>
        <taxon>Monjiviricetes</taxon>
        <taxon>Mononegavirales</taxon>
        <taxon>Rhabdoviridae</taxon>
        <taxon>Alpharhabdovirinae</taxon>
        <taxon>Vesiculovirus</taxon>
        <taxon>Vesiculovirus indiana</taxon>
    </lineage>
</organism>
<sequence length="511" mass="57571">MKCLLYLAFLFIGVNCKFTIVFPHNQKGNWKNVPSNYHYCPSSSDLNWHNDLIGTALQVKMPKSHKAIQADGWMCHASKWVTTCDFRWYGPKYITHSIRSFTPSVEQCKESIEQTKQGTWLNPGFPPQSCGYATVTDAEAAIVQVTPHHVLVDEYTGEWVDSQFINGKCSNDICPTVHNSTTWHSDYKVKGLCDSNLISTDITFFSEDGELSSLGKEGTGFRSNYFAYETGDKACKMQYCKHWGVRLPSGVWFEMADKDLFAAARFPECPEGSSISAPSQTSVDVSLIQDVERILDYSLCQETWSKIRAGLPISPVDLSYLAPKNPGTGPVFTIINGTLKYFETRYIRVDIAAPILSRMVGMISGTTTERELWDDWAPYEDVEIGPNGVLRTSLGYKFPLYMIGHGMLDSDLHLSSKAQVFEHPHIQDAASQLPDDETLFFGDTGLSKNPIEFVEGWFSSWKSSIASFFFIIGLIIGLFLVLRVGIYLCIKLKHTKKRQIYTDIEMNRLGK</sequence>
<name>GLYCO_VSIVO</name>
<accession>P04884</accession>
<organismHost>
    <name type="scientific">Aedes</name>
    <dbReference type="NCBI Taxonomy" id="7158"/>
</organismHost>
<organismHost>
    <name type="scientific">Bos taurus</name>
    <name type="common">Bovine</name>
    <dbReference type="NCBI Taxonomy" id="9913"/>
</organismHost>
<organismHost>
    <name type="scientific">Culicoides</name>
    <dbReference type="NCBI Taxonomy" id="58271"/>
</organismHost>
<organismHost>
    <name type="scientific">Equus asinus</name>
    <name type="common">Donkey</name>
    <name type="synonym">Equus africanus asinus</name>
    <dbReference type="NCBI Taxonomy" id="9793"/>
</organismHost>
<organismHost>
    <name type="scientific">Equus caballus</name>
    <name type="common">Horse</name>
    <dbReference type="NCBI Taxonomy" id="9796"/>
</organismHost>
<organismHost>
    <name type="scientific">Homo sapiens</name>
    <name type="common">Human</name>
    <dbReference type="NCBI Taxonomy" id="9606"/>
</organismHost>
<organismHost>
    <name type="scientific">Lutzomyia</name>
    <dbReference type="NCBI Taxonomy" id="252607"/>
</organismHost>
<organismHost>
    <name type="scientific">Musca domestica</name>
    <name type="common">House fly</name>
    <dbReference type="NCBI Taxonomy" id="7370"/>
</organismHost>
<organismHost>
    <name type="scientific">Simuliidae</name>
    <name type="common">black flies</name>
    <dbReference type="NCBI Taxonomy" id="7190"/>
</organismHost>
<organismHost>
    <name type="scientific">Sus scrofa</name>
    <name type="common">Pig</name>
    <dbReference type="NCBI Taxonomy" id="9823"/>
</organismHost>
<feature type="signal peptide">
    <location>
        <begin position="1"/>
        <end position="16"/>
    </location>
</feature>
<feature type="chain" id="PRO_0000041004" description="Glycoprotein">
    <location>
        <begin position="17"/>
        <end position="511"/>
    </location>
</feature>
<feature type="topological domain" description="Virion surface" evidence="4">
    <location>
        <begin position="17"/>
        <end position="467"/>
    </location>
</feature>
<feature type="transmembrane region" description="Helical" evidence="4">
    <location>
        <begin position="468"/>
        <end position="488"/>
    </location>
</feature>
<feature type="topological domain" description="Intravirion" evidence="4">
    <location>
        <begin position="489"/>
        <end position="511"/>
    </location>
</feature>
<feature type="region of interest" description="Trimerization" evidence="3">
    <location>
        <begin position="18"/>
        <end position="35"/>
    </location>
</feature>
<feature type="region of interest" description="Fusion peptide" evidence="3">
    <location>
        <begin position="53"/>
        <end position="172"/>
    </location>
</feature>
<feature type="region of interest" description="Trimerization" evidence="3">
    <location>
        <begin position="259"/>
        <end position="309"/>
    </location>
</feature>
<feature type="region of interest" description="Trimerization" evidence="3">
    <location>
        <begin position="383"/>
        <end position="405"/>
    </location>
</feature>
<feature type="short sequence motif" description="basolateral targeting ex vivo" evidence="1">
    <location>
        <begin position="496"/>
        <end position="506"/>
    </location>
</feature>
<feature type="site" description="Involved in the interaction with host LDL receptor" evidence="3">
    <location>
        <position position="63"/>
    </location>
</feature>
<feature type="site" description="pH sensor in the pre-fusion state" evidence="3">
    <location>
        <position position="76"/>
    </location>
</feature>
<feature type="site" description="pH sensor in the pre-fusion state" evidence="3">
    <location>
        <position position="178"/>
    </location>
</feature>
<feature type="site" description="Involved in the interaction with host LDL receptor" evidence="3">
    <location>
        <position position="370"/>
    </location>
</feature>
<feature type="site" description="pH sensor in the pre-fusion state" evidence="3">
    <location>
        <position position="423"/>
    </location>
</feature>
<feature type="lipid moiety-binding region" description="S-palmitoyl cysteine; by host" evidence="6">
    <location>
        <position position="489"/>
    </location>
</feature>
<feature type="glycosylation site" description="N-linked (GlcNAc...) asparagine; by host" evidence="4">
    <location>
        <position position="179"/>
    </location>
</feature>
<feature type="glycosylation site" description="N-linked (GlcNAc...) asparagine; by host" evidence="4">
    <location>
        <position position="336"/>
    </location>
</feature>
<feature type="disulfide bond" evidence="1">
    <location>
        <begin position="40"/>
        <end position="300"/>
    </location>
</feature>
<feature type="disulfide bond" evidence="1">
    <location>
        <begin position="75"/>
        <end position="108"/>
    </location>
</feature>
<feature type="disulfide bond" evidence="1">
    <location>
        <begin position="84"/>
        <end position="130"/>
    </location>
</feature>
<feature type="disulfide bond" evidence="1">
    <location>
        <begin position="169"/>
        <end position="174"/>
    </location>
</feature>
<feature type="disulfide bond" evidence="1">
    <location>
        <begin position="193"/>
        <end position="240"/>
    </location>
</feature>
<feature type="disulfide bond" evidence="1">
    <location>
        <begin position="235"/>
        <end position="269"/>
    </location>
</feature>
<feature type="sequence variant" description="In temperature-sensitive mutant TSO45, which exhibits temperature-sensitive cell-surface transport.">
    <original>F</original>
    <variation>S</variation>
    <location>
        <position position="204"/>
    </location>
</feature>
<keyword id="KW-1165">Clathrin-mediated endocytosis of virus by host</keyword>
<keyword id="KW-1015">Disulfide bond</keyword>
<keyword id="KW-1170">Fusion of virus membrane with host endosomal membrane</keyword>
<keyword id="KW-1168">Fusion of virus membrane with host membrane</keyword>
<keyword id="KW-0325">Glycoprotein</keyword>
<keyword id="KW-1043">Host membrane</keyword>
<keyword id="KW-0945">Host-virus interaction</keyword>
<keyword id="KW-0449">Lipoprotein</keyword>
<keyword id="KW-0472">Membrane</keyword>
<keyword id="KW-0564">Palmitate</keyword>
<keyword id="KW-0732">Signal</keyword>
<keyword id="KW-0812">Transmembrane</keyword>
<keyword id="KW-1133">Transmembrane helix</keyword>
<keyword id="KW-1161">Viral attachment to host cell</keyword>
<keyword id="KW-1234">Viral attachment to host entry receptor</keyword>
<keyword id="KW-0261">Viral envelope protein</keyword>
<keyword id="KW-1162">Viral penetration into host cytoplasm</keyword>
<keyword id="KW-0946">Virion</keyword>
<keyword id="KW-1164">Virus endocytosis by host</keyword>
<keyword id="KW-1160">Virus entry into host cell</keyword>
<evidence type="ECO:0000250" key="1"/>
<evidence type="ECO:0000250" key="2">
    <source>
        <dbReference type="UniProtKB" id="P03522"/>
    </source>
</evidence>
<evidence type="ECO:0000250" key="3">
    <source>
        <dbReference type="UniProtKB" id="P0C2X0"/>
    </source>
</evidence>
<evidence type="ECO:0000255" key="4"/>
<evidence type="ECO:0000269" key="5">
    <source>
    </source>
</evidence>
<evidence type="ECO:0000269" key="6">
    <source>
    </source>
</evidence>
<evidence type="ECO:0000305" key="7"/>
<reference key="1">
    <citation type="journal article" date="1985" name="J. Virol.">
        <title>A single amino acid substitution in a hydrophobic domain causes temperature-sensitive cell-surface transport of a mutant viral glycoprotein.</title>
        <authorList>
            <person name="Gallione C.J."/>
            <person name="Rose J.K."/>
        </authorList>
    </citation>
    <scope>NUCLEOTIDE SEQUENCE [MRNA]</scope>
    <scope>PALMITOYLATION AT CYS-489</scope>
</reference>
<reference key="2">
    <citation type="journal article" date="2010" name="J. Cell Biol.">
        <title>Distinct structural rearrangements of the VSV glycoprotein drive membrane fusion.</title>
        <authorList>
            <person name="Libersou S."/>
            <person name="Albertini A.A."/>
            <person name="Ouldali M."/>
            <person name="Maury V."/>
            <person name="Maheu C."/>
            <person name="Raux H."/>
            <person name="de Haas F."/>
            <person name="Roche S."/>
            <person name="Gaudin Y."/>
            <person name="Lepault J."/>
        </authorList>
    </citation>
    <scope>FUNCTION</scope>
</reference>
<dbReference type="EMBL" id="M11048">
    <property type="protein sequence ID" value="AAA48438.1"/>
    <property type="molecule type" value="mRNA"/>
</dbReference>
<dbReference type="SMR" id="P04884"/>
<dbReference type="IntAct" id="P04884">
    <property type="interactions" value="2"/>
</dbReference>
<dbReference type="MINT" id="P04884"/>
<dbReference type="GlyCosmos" id="P04884">
    <property type="glycosylation" value="2 sites, No reported glycans"/>
</dbReference>
<dbReference type="GO" id="GO:0033644">
    <property type="term" value="C:host cell membrane"/>
    <property type="evidence" value="ECO:0007669"/>
    <property type="project" value="UniProtKB-SubCell"/>
</dbReference>
<dbReference type="GO" id="GO:0016020">
    <property type="term" value="C:membrane"/>
    <property type="evidence" value="ECO:0007669"/>
    <property type="project" value="UniProtKB-KW"/>
</dbReference>
<dbReference type="GO" id="GO:0019031">
    <property type="term" value="C:viral envelope"/>
    <property type="evidence" value="ECO:0007669"/>
    <property type="project" value="UniProtKB-KW"/>
</dbReference>
<dbReference type="GO" id="GO:0055036">
    <property type="term" value="C:virion membrane"/>
    <property type="evidence" value="ECO:0007669"/>
    <property type="project" value="UniProtKB-SubCell"/>
</dbReference>
<dbReference type="GO" id="GO:0075512">
    <property type="term" value="P:clathrin-dependent endocytosis of virus by host cell"/>
    <property type="evidence" value="ECO:0007669"/>
    <property type="project" value="UniProtKB-KW"/>
</dbReference>
<dbReference type="GO" id="GO:0098670">
    <property type="term" value="P:entry receptor-mediated virion attachment to host cell"/>
    <property type="evidence" value="ECO:0007669"/>
    <property type="project" value="UniProtKB-KW"/>
</dbReference>
<dbReference type="GO" id="GO:0039654">
    <property type="term" value="P:fusion of virus membrane with host endosome membrane"/>
    <property type="evidence" value="ECO:0007669"/>
    <property type="project" value="UniProtKB-KW"/>
</dbReference>
<dbReference type="Gene3D" id="2.30.29.130">
    <property type="match status" value="2"/>
</dbReference>
<dbReference type="Gene3D" id="2.30.30.640">
    <property type="match status" value="2"/>
</dbReference>
<dbReference type="InterPro" id="IPR055447">
    <property type="entry name" value="Rhabdo_glycop_CD"/>
</dbReference>
<dbReference type="InterPro" id="IPR001903">
    <property type="entry name" value="Rhabdo_glycop_FD"/>
</dbReference>
<dbReference type="Pfam" id="PF24833">
    <property type="entry name" value="Rhabdo_glycop_CD"/>
    <property type="match status" value="1"/>
</dbReference>
<dbReference type="Pfam" id="PF00974">
    <property type="entry name" value="Rhabdo_glycop_FD"/>
    <property type="match status" value="1"/>
</dbReference>
<dbReference type="SUPFAM" id="SSF161008">
    <property type="entry name" value="Viral glycoprotein ectodomain-like"/>
    <property type="match status" value="1"/>
</dbReference>